<comment type="function">
    <text evidence="1">Capsid proteins VP1, VP2, and VP3 form a closed capsid enclosing the viral positive strand RNA genome. All these proteins contain a beta-sheet structure called beta-barrel jelly roll. Together they form an icosahedral capsid (T=3) composed of 60 copies of each VP1, VP2, and VP3, with a diameter of approximately 300 Angstroms. VP1 is situated at the 12 fivefold axes, whereas VP2 and VP3 are located at the quasi-sixfold axes (By similarity).</text>
</comment>
<comment type="function">
    <molecule>Capsid protein VP0</molecule>
    <text evidence="1">VP0 precursor is a component of immature procapsids. The N-terminal domain of VP0, protein VP4, is needed for the assembly of 12 pentamers into the icosahedral structure. Unlike other picornaviruses, AEV VP4 may not be myristoylated (By similarity).</text>
</comment>
<comment type="function">
    <text evidence="1">Protein 2B and 2BC precursor affect membrane integrity and cause an increase in membrane permeability.</text>
</comment>
<comment type="function">
    <molecule>Protein 2C</molecule>
    <text evidence="1">Associates with and induces structural rearrangements of intracellular membranes. It displays RNA-binding, nucleotide binding and NTPase activities (By similarity).</text>
</comment>
<comment type="function">
    <text evidence="1">Protein 3A, via its hydrophobic domain, serves as membrane anchor.</text>
</comment>
<comment type="function">
    <text evidence="1">Protein 3B is covalently linked to the 5'-end of both the positive-strand and negative-strand genomic RNAs. It acts as a genome-linked replication primer (By similarity).</text>
</comment>
<comment type="function">
    <molecule>Protease 3C</molecule>
    <text evidence="1">Cysteine protease that generates mature viral proteins from the precursor polyprotein. In addition to its proteolytic activity, it binds to viral RNA, and thus influences viral genome replication. RNA and substrate bind cooperatively to the protease (By similarity).</text>
</comment>
<comment type="function">
    <text evidence="3">RNA-directed RNA polymerase 3D-POL replicates genomic and antigenomic RNA by recognizing replications specific signals.</text>
</comment>
<comment type="catalytic activity">
    <reaction evidence="3">
        <text>RNA(n) + a ribonucleoside 5'-triphosphate = RNA(n+1) + diphosphate</text>
        <dbReference type="Rhea" id="RHEA:21248"/>
        <dbReference type="Rhea" id="RHEA-COMP:14527"/>
        <dbReference type="Rhea" id="RHEA-COMP:17342"/>
        <dbReference type="ChEBI" id="CHEBI:33019"/>
        <dbReference type="ChEBI" id="CHEBI:61557"/>
        <dbReference type="ChEBI" id="CHEBI:140395"/>
        <dbReference type="EC" id="2.7.7.48"/>
    </reaction>
</comment>
<comment type="catalytic activity">
    <reaction>
        <text>a ribonucleoside 5'-triphosphate + H2O = a ribonucleoside 5'-diphosphate + phosphate + H(+)</text>
        <dbReference type="Rhea" id="RHEA:23680"/>
        <dbReference type="ChEBI" id="CHEBI:15377"/>
        <dbReference type="ChEBI" id="CHEBI:15378"/>
        <dbReference type="ChEBI" id="CHEBI:43474"/>
        <dbReference type="ChEBI" id="CHEBI:57930"/>
        <dbReference type="ChEBI" id="CHEBI:61557"/>
        <dbReference type="EC" id="3.6.1.15"/>
    </reaction>
</comment>
<comment type="catalytic activity">
    <reaction evidence="5">
        <text>Selective cleavage of Gln-|-Gly bond in the poliovirus polyprotein. In other picornavirus reactions Glu may be substituted for Gln, and Ser or Thr for Gly.</text>
        <dbReference type="EC" id="3.4.22.28"/>
    </reaction>
</comment>
<comment type="subcellular location">
    <molecule>Capsid protein VP2</molecule>
    <subcellularLocation>
        <location>Virion</location>
    </subcellularLocation>
    <subcellularLocation>
        <location evidence="7">Host cytoplasm</location>
    </subcellularLocation>
</comment>
<comment type="subcellular location">
    <molecule>Capsid protein VP3</molecule>
    <subcellularLocation>
        <location>Virion</location>
    </subcellularLocation>
    <subcellularLocation>
        <location evidence="7">Host cytoplasm</location>
    </subcellularLocation>
</comment>
<comment type="subcellular location">
    <molecule>Capsid protein VP1</molecule>
    <subcellularLocation>
        <location>Virion</location>
    </subcellularLocation>
    <subcellularLocation>
        <location evidence="7">Host cytoplasm</location>
    </subcellularLocation>
</comment>
<comment type="subcellular location">
    <molecule>Protein 2B</molecule>
    <subcellularLocation>
        <location evidence="7">Host cytoplasmic vesicle membrane</location>
        <topology evidence="7">Peripheral membrane protein</topology>
        <orientation evidence="7">Cytoplasmic side</orientation>
    </subcellularLocation>
    <text evidence="1">Probably localizes to the surface of intracellular membrane vesicles that are induced after virus infection as the site for viral RNA replication. These vesicles are derived from the endoplasmic reticulum (By similarity).</text>
</comment>
<comment type="subcellular location">
    <molecule>Protein 2C</molecule>
    <subcellularLocation>
        <location evidence="7">Host cytoplasmic vesicle membrane</location>
        <topology evidence="7">Peripheral membrane protein</topology>
        <orientation evidence="7">Cytoplasmic side</orientation>
    </subcellularLocation>
    <text evidence="1">Probably localizes to the surface of intracellular membrane vesicles that are induced after virus infection as the site for viral RNA replication. These vesicles are derived from the endoplasmic reticulum. May associate with membranes through a N-terminal amphipathic helix (By similarity).</text>
</comment>
<comment type="subcellular location">
    <molecule>Protein 3A</molecule>
    <subcellularLocation>
        <location evidence="7">Host cytoplasmic vesicle membrane</location>
        <topology evidence="7">Peripheral membrane protein</topology>
        <orientation evidence="7">Cytoplasmic side</orientation>
    </subcellularLocation>
    <text evidence="1">Probably localizes to the surface of intracellular membrane vesicles that are induced after virus infection as the site for viral RNA replication. These vesicles are derived from the endoplasmic reticulum (By similarity).</text>
</comment>
<comment type="subcellular location">
    <molecule>Protein 3B</molecule>
    <subcellularLocation>
        <location evidence="7">Virion</location>
    </subcellularLocation>
</comment>
<comment type="subcellular location">
    <molecule>Protease 3C</molecule>
    <subcellularLocation>
        <location evidence="7">Host cytoplasm</location>
    </subcellularLocation>
</comment>
<comment type="subcellular location">
    <molecule>RNA-directed RNA polymerase 3D-POL</molecule>
    <subcellularLocation>
        <location evidence="7">Host cytoplasmic vesicle membrane</location>
        <topology evidence="7">Peripheral membrane protein</topology>
        <orientation evidence="7">Cytoplasmic side</orientation>
    </subcellularLocation>
    <text evidence="1">Interacts with membranes in a complex with viral protein 3AB. Probably localizes to the surface of intracellular membrane vesicles that are induced after virus infection as the site for viral RNA replication. These vesicles are derived from the endoplasmic reticulum (By similarity).</text>
</comment>
<comment type="PTM">
    <text evidence="1">Specific enzymatic cleavages by the viral protease in vivo yield a variety of precursors and mature proteins. During virion maturation, non-infectious particles are rendered infectious following cleavage of VP0. This maturation cleavage is followed by a conformational change of the particle (By similarity).</text>
</comment>
<comment type="PTM">
    <text evidence="1">VPg is uridylylated by the polymerase and is covalently linked to the 5'-end of genomic RNA. This uridylylated form acts as a nucleotide-peptide primer for the polymerase (By similarity).</text>
</comment>
<comment type="similarity">
    <text evidence="7">Belongs to the picornaviridae polyprotein family.</text>
</comment>
<feature type="chain" id="PRO_0000310521" description="Genome polyprotein" evidence="1">
    <location>
        <begin position="1"/>
        <end position="2134"/>
    </location>
</feature>
<feature type="chain" id="PRO_0000310522" description="Capsid protein VP0" evidence="2">
    <location>
        <begin position="1"/>
        <end position="242"/>
    </location>
</feature>
<feature type="chain" id="PRO_0000310523" description="Capsid protein VP4" evidence="2">
    <location>
        <begin position="1"/>
        <end position="19"/>
    </location>
</feature>
<feature type="chain" id="PRO_0000310524" description="Capsid protein VP2" evidence="2">
    <location>
        <begin position="20"/>
        <end position="242"/>
    </location>
</feature>
<feature type="chain" id="PRO_0000310525" description="Capsid protein VP3" evidence="2">
    <location>
        <begin position="243"/>
        <end position="487"/>
    </location>
</feature>
<feature type="chain" id="PRO_0000310526" description="Capsid protein VP1" evidence="2">
    <location>
        <begin position="488"/>
        <end position="757"/>
    </location>
</feature>
<feature type="chain" id="PRO_0000310527" description="Protein 2A" evidence="2">
    <location>
        <begin position="758"/>
        <end position="806"/>
    </location>
</feature>
<feature type="chain" id="PRO_0000310528" description="Protein 2B" evidence="2">
    <location>
        <begin position="807"/>
        <end position="1021"/>
    </location>
</feature>
<feature type="chain" id="PRO_0000310529" description="Protein 2C" evidence="2">
    <location>
        <begin position="1022"/>
        <end position="1347"/>
    </location>
</feature>
<feature type="chain" id="PRO_0000310530" description="Protein 3A" evidence="2">
    <location>
        <begin position="1348"/>
        <end position="1412"/>
    </location>
</feature>
<feature type="chain" id="PRO_0000310531" description="Protein 3B" evidence="2">
    <location>
        <begin position="1413"/>
        <end position="1433"/>
    </location>
</feature>
<feature type="chain" id="PRO_0000310532" description="Protease 3C" evidence="2">
    <location>
        <begin position="1434"/>
        <end position="1648"/>
    </location>
</feature>
<feature type="chain" id="PRO_0000310533" description="RNA-directed RNA polymerase 3D-POL" evidence="2">
    <location>
        <begin position="1649"/>
        <end position="2134"/>
    </location>
</feature>
<feature type="topological domain" description="Cytoplasmic" evidence="2">
    <location>
        <begin position="1"/>
        <end position="1377"/>
    </location>
</feature>
<feature type="intramembrane region" evidence="2">
    <location>
        <begin position="1378"/>
        <end position="1392"/>
    </location>
</feature>
<feature type="topological domain" description="Cytoplasmic" evidence="2">
    <location>
        <begin position="1393"/>
        <end position="2134"/>
    </location>
</feature>
<feature type="domain" description="LRAT" evidence="6">
    <location>
        <begin position="781"/>
        <end position="882"/>
    </location>
</feature>
<feature type="domain" description="SF3 helicase" evidence="4">
    <location>
        <begin position="1127"/>
        <end position="1289"/>
    </location>
</feature>
<feature type="domain" description="Peptidase C3" evidence="5">
    <location>
        <begin position="1431"/>
        <end position="1643"/>
    </location>
</feature>
<feature type="domain" description="RdRp catalytic" evidence="3">
    <location>
        <begin position="1880"/>
        <end position="2001"/>
    </location>
</feature>
<feature type="active site" evidence="6">
    <location>
        <position position="791"/>
    </location>
</feature>
<feature type="active site" evidence="6">
    <location>
        <position position="802"/>
    </location>
</feature>
<feature type="active site" description="Acyl-thioester intermediate" evidence="6">
    <location>
        <position position="863"/>
    </location>
</feature>
<feature type="active site" description="For protease 3C activity" evidence="5">
    <location>
        <position position="1477"/>
    </location>
</feature>
<feature type="active site" description="For protease 3C activity" evidence="5">
    <location>
        <position position="1515"/>
    </location>
</feature>
<feature type="active site" description="For protease 3C activity" evidence="5">
    <location>
        <position position="1603"/>
    </location>
</feature>
<feature type="binding site" evidence="4">
    <location>
        <begin position="1153"/>
        <end position="1160"/>
    </location>
    <ligand>
        <name>ATP</name>
        <dbReference type="ChEBI" id="CHEBI:30616"/>
    </ligand>
</feature>
<feature type="site" description="Cleavage" evidence="2">
    <location>
        <begin position="19"/>
        <end position="20"/>
    </location>
</feature>
<feature type="site" description="Cleavage; by protease 3C" evidence="2">
    <location>
        <begin position="242"/>
        <end position="243"/>
    </location>
</feature>
<feature type="site" description="Cleavage; by protease 3C" evidence="2">
    <location>
        <begin position="487"/>
        <end position="488"/>
    </location>
</feature>
<feature type="site" description="Cleavage; by host" evidence="2">
    <location>
        <begin position="757"/>
        <end position="758"/>
    </location>
</feature>
<feature type="site" description="Cleavage; by protease 3C" evidence="1">
    <location>
        <begin position="806"/>
        <end position="807"/>
    </location>
</feature>
<feature type="site" description="Cleavage; by protease 3C" evidence="2">
    <location>
        <begin position="1021"/>
        <end position="1022"/>
    </location>
</feature>
<feature type="site" description="Cleavage; by protease 3C" evidence="2">
    <location>
        <begin position="1347"/>
        <end position="1348"/>
    </location>
</feature>
<feature type="site" description="Cleavage; by protease 3C" evidence="2">
    <location>
        <begin position="1412"/>
        <end position="1413"/>
    </location>
</feature>
<feature type="site" description="Cleavage; by protease 3C" evidence="2">
    <location>
        <begin position="1433"/>
        <end position="1434"/>
    </location>
</feature>
<feature type="site" description="Cleavage; by protease 3C" evidence="1">
    <location>
        <begin position="1648"/>
        <end position="1649"/>
    </location>
</feature>
<feature type="modified residue" description="O-(5'-phospho-RNA)-tyrosine" evidence="1">
    <location>
        <position position="1415"/>
    </location>
</feature>
<organism>
    <name type="scientific">Avian encephalomyelitis virus (strain L2Z)</name>
    <name type="common">AEV</name>
    <dbReference type="NCBI Taxonomy" id="475780"/>
    <lineage>
        <taxon>Viruses</taxon>
        <taxon>Riboviria</taxon>
        <taxon>Orthornavirae</taxon>
        <taxon>Pisuviricota</taxon>
        <taxon>Pisoniviricetes</taxon>
        <taxon>Picornavirales</taxon>
        <taxon>Picornaviridae</taxon>
        <taxon>Heptrevirinae</taxon>
        <taxon>Tremovirus</taxon>
        <taxon>Tremovirus A</taxon>
    </lineage>
</organism>
<evidence type="ECO:0000250" key="1"/>
<evidence type="ECO:0000255" key="2"/>
<evidence type="ECO:0000255" key="3">
    <source>
        <dbReference type="PROSITE-ProRule" id="PRU00539"/>
    </source>
</evidence>
<evidence type="ECO:0000255" key="4">
    <source>
        <dbReference type="PROSITE-ProRule" id="PRU00551"/>
    </source>
</evidence>
<evidence type="ECO:0000255" key="5">
    <source>
        <dbReference type="PROSITE-ProRule" id="PRU01222"/>
    </source>
</evidence>
<evidence type="ECO:0000255" key="6">
    <source>
        <dbReference type="PROSITE-ProRule" id="PRU01283"/>
    </source>
</evidence>
<evidence type="ECO:0000305" key="7"/>
<sequence length="2134" mass="238653">MSKLFSTVGRTVDEVLSVLNDEDTESYAGPDRTAVVGGGFLTTVDQSSVSTATMGSLQDVQYRTAVDIPGSRVTQGERFFLIDQREWNSTQSEWQLLGKIDIVKELLDQSYAVDGLLKYHSYARFGLDVIVQINPTSFQAGGLIAALVPYDQVDIESIVAMTTYCHGKVNCNINYVVRMKVPYIYSRGCYNLRNSAYSIWMLVIRVWSRLQLGSGTSTQITITTLARFVDLELHGLSPLVAQMMRNEFRLSSSSNIVNLANYDDARAKVSLALGQEEFSRDSSSTGGELVHHFSQWTSIPCLAFTFTFPGTVGPGTHIWSTTVDPFSCNLRASSTVHPTNLSSIAGMFCFWRGDIVFEFQVFCTKYHSGRLMFVYVPGDENTKISTLTAKQASTGLTAVFDINGVNSTLVFRCPFISDTPYRVNPTTHKSLWPYATGKLVCYVYNILNAPASVSPSVSINVYKSAADLELYAPVYGVSPTNTSIFAQGKEDEGGFFSVPEVEQHVVEDKEPQGPLHVTPFGAVKAMEDPQLARKTPGTFPELAPGKPRHTVDHMDLYKFMGRAHYLWGHEFTKTDMQYTFQIPLSPIKEGFVTGTLRWFLSLFQLYRGSLDITMTFAGKTNVDGIVYFVPEGVAIETEREEQTPLLTLNYKTSVGAIRFNTGQTTNVQFRIPFYTPLEHIATHSKNAMDSVLGAITTQITNYSAQDEYLQVTYYISFNEDSQFSVPRAVPVVSSFTDTSSKTVMNTYWLDDDELVEESSHSSFDEIEEAQCSKCKMDLGDIVICSGEKAKHFGVYVGDGVVHVDPEGNATNWFMKRKATVKKSKNLDKWCFALSPRIDRTLICETANLMVGREVEYDIFVKNCETYARGIASGDYGTKEGEKWKTLLSAVGVAAMTTTMMAMRHQLLDTSLTKLPQKVGEVTNEVRKILEDTSAGVREFKEKVSSILRKTWPGKTSIKIMKWTFRIVKMCVGVGLCYAHGWDSKPVTAVVTMFSMDFLDLVIDGIEIGRMIIHELTTPKAQGLSEINQVLSIAKNAKDVIKMLIEIFCKVIERITGEHGKKIQWAQDKKEEIMNVLERAEKWITTSDDHSEGIECLKLVRSIQSVIRGEESLKELAGELRAVGTHVLNKLGRLDKPNAPILVRAEPTVLYLYGNRGGGKSLASMAIAVKLCKELGISHVEGIYTKPIMSDFWDGYAGQPVVIMDDLGQSTSDEDWTNFCQLVSSCPLRLNMANLEKKGTQFNSPFIIASSNLSHPCPKTVYCTDAIARRLHIKVKVSPKEEFSTHAMLDVAKAKKAGAYCNLDCLDFQKISDLASTPVSVQDIVLALLHTNVDKQTVMGNIIQYWAQSNPREVFDTMAEGKNSGKYLWLFEKIKTSKWYILGCVGAALSVSVLGVFAYHMIKNHFRDQQHDQSAYSAAIKPLRVVRLEQSDAQSVVDISNVVHGNLVRVGVGPNEARIHWLNNGWGVYNTYILMPYHGIKDADVDDDLYIERAGTIYSTNMKMVQVLFLESREGDLVLINVPRLPKFRDIRNHFSTEENIRRAEGMPGTLCTLDHERFTLVTESDLKMVEAATYVCEDDKGVRTDISVGRSWKAKACTVAGMCGGALVTSNNKMQNAIVGIHVAGGAPAISRVITKEMIEEMLKTRAQCSRIWKTEFVEKKISVGSKTKYHKSPLYDFCPQKVIKCPTKLFYQGEIDVMQVMLAKYSSPIVSEPLGYATVVEAYTNRMVSFFSEPRQLTYDECINGIEGLDAIDLKTSAGFPYNTLSLKKSDLIINGKKAQRLQQDVEKMEEDLHMNRSIQVVFTTCAKDELRPLSKGMLGKTRAIKACPVSFTILFRKYLGYALAQIQSHPGFHTGIAVGVDPDQDWHCMWYSIVTQCDLVVGLDFSNYDASLSPFMIYHAGRVLGQICGLDPRLVDRIMEPIVNSVHQLGSMRYYVDGSMPSGTPATSVLNSIINVVNISHVLCALEKISVFEVFKLSKILTYGDDVLFCIKKESLDQKSFPLSSFVQGLKELGMSPTGADKMEVKVTPVHKMSFLKRTFYVDEWSICHPRISEETVYSMLAWKSDNASMKHVIETSIWFMFHHGPRKYVIFCTCLRGVLCRVGIGLYIPTYKELEVRYDRLVKDRVIDDSF</sequence>
<organismHost>
    <name type="scientific">Anas</name>
    <name type="common">ducks</name>
    <dbReference type="NCBI Taxonomy" id="8835"/>
</organismHost>
<organismHost>
    <name type="scientific">Gallus gallus</name>
    <name type="common">Chicken</name>
    <dbReference type="NCBI Taxonomy" id="9031"/>
</organismHost>
<organismHost>
    <name type="scientific">Phasianidae</name>
    <name type="common">turkeys</name>
    <dbReference type="NCBI Taxonomy" id="9005"/>
</organismHost>
<accession>Q6WQ42</accession>
<dbReference type="EC" id="3.6.1.15"/>
<dbReference type="EC" id="3.4.22.28"/>
<dbReference type="EC" id="2.7.7.48"/>
<dbReference type="EMBL" id="AY275539">
    <property type="protein sequence ID" value="AAN09930.2"/>
    <property type="molecule type" value="Genomic_RNA"/>
</dbReference>
<dbReference type="SMR" id="Q6WQ42"/>
<dbReference type="MEROPS" id="C03.005"/>
<dbReference type="Proteomes" id="UP000006886">
    <property type="component" value="Genome"/>
</dbReference>
<dbReference type="GO" id="GO:0044162">
    <property type="term" value="C:host cell cytoplasmic vesicle membrane"/>
    <property type="evidence" value="ECO:0007669"/>
    <property type="project" value="UniProtKB-SubCell"/>
</dbReference>
<dbReference type="GO" id="GO:0016020">
    <property type="term" value="C:membrane"/>
    <property type="evidence" value="ECO:0007669"/>
    <property type="project" value="UniProtKB-KW"/>
</dbReference>
<dbReference type="GO" id="GO:0019028">
    <property type="term" value="C:viral capsid"/>
    <property type="evidence" value="ECO:0007669"/>
    <property type="project" value="UniProtKB-KW"/>
</dbReference>
<dbReference type="GO" id="GO:0005524">
    <property type="term" value="F:ATP binding"/>
    <property type="evidence" value="ECO:0007669"/>
    <property type="project" value="UniProtKB-KW"/>
</dbReference>
<dbReference type="GO" id="GO:0015267">
    <property type="term" value="F:channel activity"/>
    <property type="evidence" value="ECO:0007669"/>
    <property type="project" value="UniProtKB-KW"/>
</dbReference>
<dbReference type="GO" id="GO:0004197">
    <property type="term" value="F:cysteine-type endopeptidase activity"/>
    <property type="evidence" value="ECO:0007669"/>
    <property type="project" value="UniProtKB-EC"/>
</dbReference>
<dbReference type="GO" id="GO:0017111">
    <property type="term" value="F:ribonucleoside triphosphate phosphatase activity"/>
    <property type="evidence" value="ECO:0007669"/>
    <property type="project" value="UniProtKB-EC"/>
</dbReference>
<dbReference type="GO" id="GO:0003723">
    <property type="term" value="F:RNA binding"/>
    <property type="evidence" value="ECO:0007669"/>
    <property type="project" value="UniProtKB-KW"/>
</dbReference>
<dbReference type="GO" id="GO:0003724">
    <property type="term" value="F:RNA helicase activity"/>
    <property type="evidence" value="ECO:0007669"/>
    <property type="project" value="InterPro"/>
</dbReference>
<dbReference type="GO" id="GO:0003968">
    <property type="term" value="F:RNA-directed RNA polymerase activity"/>
    <property type="evidence" value="ECO:0007669"/>
    <property type="project" value="UniProtKB-KW"/>
</dbReference>
<dbReference type="GO" id="GO:0005198">
    <property type="term" value="F:structural molecule activity"/>
    <property type="evidence" value="ECO:0007669"/>
    <property type="project" value="InterPro"/>
</dbReference>
<dbReference type="GO" id="GO:0006351">
    <property type="term" value="P:DNA-templated transcription"/>
    <property type="evidence" value="ECO:0007669"/>
    <property type="project" value="InterPro"/>
</dbReference>
<dbReference type="GO" id="GO:0034220">
    <property type="term" value="P:monoatomic ion transmembrane transport"/>
    <property type="evidence" value="ECO:0007669"/>
    <property type="project" value="UniProtKB-KW"/>
</dbReference>
<dbReference type="GO" id="GO:0006508">
    <property type="term" value="P:proteolysis"/>
    <property type="evidence" value="ECO:0007669"/>
    <property type="project" value="UniProtKB-KW"/>
</dbReference>
<dbReference type="GO" id="GO:0046718">
    <property type="term" value="P:symbiont entry into host cell"/>
    <property type="evidence" value="ECO:0007669"/>
    <property type="project" value="UniProtKB-KW"/>
</dbReference>
<dbReference type="GO" id="GO:0039694">
    <property type="term" value="P:viral RNA genome replication"/>
    <property type="evidence" value="ECO:0007669"/>
    <property type="project" value="InterPro"/>
</dbReference>
<dbReference type="GO" id="GO:0019062">
    <property type="term" value="P:virion attachment to host cell"/>
    <property type="evidence" value="ECO:0007669"/>
    <property type="project" value="UniProtKB-KW"/>
</dbReference>
<dbReference type="CDD" id="cd23193">
    <property type="entry name" value="ps-ssRNA_Picornaviridae"/>
    <property type="match status" value="1"/>
</dbReference>
<dbReference type="CDD" id="cd00205">
    <property type="entry name" value="rhv_like"/>
    <property type="match status" value="2"/>
</dbReference>
<dbReference type="Gene3D" id="1.20.960.20">
    <property type="match status" value="1"/>
</dbReference>
<dbReference type="Gene3D" id="2.60.120.20">
    <property type="match status" value="3"/>
</dbReference>
<dbReference type="Gene3D" id="3.30.70.270">
    <property type="match status" value="1"/>
</dbReference>
<dbReference type="Gene3D" id="3.90.1720.10">
    <property type="entry name" value="endopeptidase domain like (from Nostoc punctiforme)"/>
    <property type="match status" value="1"/>
</dbReference>
<dbReference type="Gene3D" id="3.40.50.300">
    <property type="entry name" value="P-loop containing nucleotide triphosphate hydrolases"/>
    <property type="match status" value="1"/>
</dbReference>
<dbReference type="Gene3D" id="2.40.10.10">
    <property type="entry name" value="Trypsin-like serine proteases"/>
    <property type="match status" value="2"/>
</dbReference>
<dbReference type="InterPro" id="IPR043502">
    <property type="entry name" value="DNA/RNA_pol_sf"/>
</dbReference>
<dbReference type="InterPro" id="IPR000605">
    <property type="entry name" value="Helicase_SF3_ssDNA/RNA_vir"/>
</dbReference>
<dbReference type="InterPro" id="IPR014759">
    <property type="entry name" value="Helicase_SF3_ssRNA_vir"/>
</dbReference>
<dbReference type="InterPro" id="IPR024354">
    <property type="entry name" value="Hepatitis_A_VP1-2A"/>
</dbReference>
<dbReference type="InterPro" id="IPR007053">
    <property type="entry name" value="LRAT_dom"/>
</dbReference>
<dbReference type="InterPro" id="IPR027417">
    <property type="entry name" value="P-loop_NTPase"/>
</dbReference>
<dbReference type="InterPro" id="IPR044067">
    <property type="entry name" value="PCV_3C_PRO"/>
</dbReference>
<dbReference type="InterPro" id="IPR000199">
    <property type="entry name" value="Peptidase_C3A/C3B_picornavir"/>
</dbReference>
<dbReference type="InterPro" id="IPR009003">
    <property type="entry name" value="Peptidase_S1_PA"/>
</dbReference>
<dbReference type="InterPro" id="IPR043504">
    <property type="entry name" value="Peptidase_S1_PA_chymotrypsin"/>
</dbReference>
<dbReference type="InterPro" id="IPR001676">
    <property type="entry name" value="Picornavirus_capsid"/>
</dbReference>
<dbReference type="InterPro" id="IPR043128">
    <property type="entry name" value="Rev_trsase/Diguanyl_cyclase"/>
</dbReference>
<dbReference type="InterPro" id="IPR033703">
    <property type="entry name" value="Rhv-like"/>
</dbReference>
<dbReference type="InterPro" id="IPR001205">
    <property type="entry name" value="RNA-dir_pol_C"/>
</dbReference>
<dbReference type="InterPro" id="IPR007094">
    <property type="entry name" value="RNA-dir_pol_PSvirus"/>
</dbReference>
<dbReference type="InterPro" id="IPR029053">
    <property type="entry name" value="Viral_coat"/>
</dbReference>
<dbReference type="Pfam" id="PF12944">
    <property type="entry name" value="HAV_VP"/>
    <property type="match status" value="1"/>
</dbReference>
<dbReference type="Pfam" id="PF04970">
    <property type="entry name" value="LRAT"/>
    <property type="match status" value="1"/>
</dbReference>
<dbReference type="Pfam" id="PF00548">
    <property type="entry name" value="Peptidase_C3"/>
    <property type="match status" value="1"/>
</dbReference>
<dbReference type="Pfam" id="PF00680">
    <property type="entry name" value="RdRP_1"/>
    <property type="match status" value="1"/>
</dbReference>
<dbReference type="Pfam" id="PF00073">
    <property type="entry name" value="Rhv"/>
    <property type="match status" value="2"/>
</dbReference>
<dbReference type="Pfam" id="PF00910">
    <property type="entry name" value="RNA_helicase"/>
    <property type="match status" value="1"/>
</dbReference>
<dbReference type="SUPFAM" id="SSF56672">
    <property type="entry name" value="DNA/RNA polymerases"/>
    <property type="match status" value="1"/>
</dbReference>
<dbReference type="SUPFAM" id="SSF52540">
    <property type="entry name" value="P-loop containing nucleoside triphosphate hydrolases"/>
    <property type="match status" value="1"/>
</dbReference>
<dbReference type="SUPFAM" id="SSF88633">
    <property type="entry name" value="Positive stranded ssRNA viruses"/>
    <property type="match status" value="3"/>
</dbReference>
<dbReference type="SUPFAM" id="SSF50494">
    <property type="entry name" value="Trypsin-like serine proteases"/>
    <property type="match status" value="1"/>
</dbReference>
<dbReference type="PROSITE" id="PS51934">
    <property type="entry name" value="LRAT"/>
    <property type="match status" value="1"/>
</dbReference>
<dbReference type="PROSITE" id="PS51874">
    <property type="entry name" value="PCV_3C_PRO"/>
    <property type="match status" value="1"/>
</dbReference>
<dbReference type="PROSITE" id="PS50507">
    <property type="entry name" value="RDRP_SSRNA_POS"/>
    <property type="match status" value="1"/>
</dbReference>
<dbReference type="PROSITE" id="PS51218">
    <property type="entry name" value="SF3_HELICASE_2"/>
    <property type="match status" value="1"/>
</dbReference>
<keyword id="KW-0067">ATP-binding</keyword>
<keyword id="KW-0167">Capsid protein</keyword>
<keyword id="KW-0191">Covalent protein-RNA linkage</keyword>
<keyword id="KW-0347">Helicase</keyword>
<keyword id="KW-1035">Host cytoplasm</keyword>
<keyword id="KW-1036">Host cytoplasmic vesicle</keyword>
<keyword id="KW-1043">Host membrane</keyword>
<keyword id="KW-0945">Host-virus interaction</keyword>
<keyword id="KW-0378">Hydrolase</keyword>
<keyword id="KW-0407">Ion channel</keyword>
<keyword id="KW-0406">Ion transport</keyword>
<keyword id="KW-0472">Membrane</keyword>
<keyword id="KW-0547">Nucleotide-binding</keyword>
<keyword id="KW-0548">Nucleotidyltransferase</keyword>
<keyword id="KW-0597">Phosphoprotein</keyword>
<keyword id="KW-0645">Protease</keyword>
<keyword id="KW-0694">RNA-binding</keyword>
<keyword id="KW-0696">RNA-directed RNA polymerase</keyword>
<keyword id="KW-0788">Thiol protease</keyword>
<keyword id="KW-0808">Transferase</keyword>
<keyword id="KW-0813">Transport</keyword>
<keyword id="KW-1161">Viral attachment to host cell</keyword>
<keyword id="KW-1182">Viral ion channel</keyword>
<keyword id="KW-0693">Viral RNA replication</keyword>
<keyword id="KW-0946">Virion</keyword>
<keyword id="KW-1160">Virus entry into host cell</keyword>
<name>POLG_AEVL2</name>
<proteinExistence type="inferred from homology"/>
<protein>
    <recommendedName>
        <fullName>Genome polyprotein</fullName>
    </recommendedName>
    <component>
        <recommendedName>
            <fullName>Capsid protein VP0</fullName>
        </recommendedName>
        <alternativeName>
            <fullName>VP4-VP2</fullName>
        </alternativeName>
    </component>
    <component>
        <recommendedName>
            <fullName>Capsid protein VP4</fullName>
        </recommendedName>
        <alternativeName>
            <fullName>P1A</fullName>
        </alternativeName>
        <alternativeName>
            <fullName>Virion protein 4</fullName>
        </alternativeName>
    </component>
    <component>
        <recommendedName>
            <fullName>Capsid protein VP2</fullName>
        </recommendedName>
        <alternativeName>
            <fullName>P1B</fullName>
        </alternativeName>
        <alternativeName>
            <fullName>Virion protein 2</fullName>
        </alternativeName>
    </component>
    <component>
        <recommendedName>
            <fullName>Capsid protein VP3</fullName>
        </recommendedName>
        <alternativeName>
            <fullName>P1C</fullName>
        </alternativeName>
        <alternativeName>
            <fullName>Virion protein 3</fullName>
        </alternativeName>
    </component>
    <component>
        <recommendedName>
            <fullName>Capsid protein VP1</fullName>
        </recommendedName>
        <alternativeName>
            <fullName>P1D</fullName>
        </alternativeName>
        <alternativeName>
            <fullName>Virion protein 1</fullName>
        </alternativeName>
    </component>
    <component>
        <recommendedName>
            <fullName>Protein 2A</fullName>
            <shortName>P2A</shortName>
        </recommendedName>
    </component>
    <component>
        <recommendedName>
            <fullName>Protein 2B</fullName>
            <shortName>P2B</shortName>
        </recommendedName>
    </component>
    <component>
        <recommendedName>
            <fullName>Protein 2C</fullName>
            <shortName>P2C</shortName>
            <ecNumber>3.6.1.15</ecNumber>
        </recommendedName>
    </component>
    <component>
        <recommendedName>
            <fullName>Protein 3A</fullName>
            <shortName>P3A</shortName>
        </recommendedName>
    </component>
    <component>
        <recommendedName>
            <fullName>Protein 3B</fullName>
            <shortName>P3B</shortName>
        </recommendedName>
        <alternativeName>
            <fullName>VPg</fullName>
        </alternativeName>
    </component>
    <component>
        <recommendedName>
            <fullName>Protease 3C</fullName>
            <shortName>P3C</shortName>
            <ecNumber>3.4.22.28</ecNumber>
        </recommendedName>
        <alternativeName>
            <fullName>Picornain 3C</fullName>
        </alternativeName>
    </component>
    <component>
        <recommendedName>
            <fullName>RNA-directed RNA polymerase 3D-POL</fullName>
            <shortName>P3D-POL</shortName>
            <ecNumber>2.7.7.48</ecNumber>
        </recommendedName>
    </component>
</protein>
<reference key="1">
    <citation type="submission" date="2003-04" db="EMBL/GenBank/DDBJ databases">
        <title>Determination of the whole genome of avian encephalomyelitis virus isolate from China.</title>
        <authorList>
            <person name="Wei L."/>
            <person name="Liu J."/>
            <person name="Yao W."/>
        </authorList>
    </citation>
    <scope>NUCLEOTIDE SEQUENCE [GENOMIC RNA]</scope>
</reference>